<reference key="1">
    <citation type="submission" date="2005-03" db="EMBL/GenBank/DDBJ databases">
        <title>Complete structure of the chloroplast genome of Populus alba.</title>
        <authorList>
            <person name="Okumura S."/>
            <person name="Yamashita A."/>
            <person name="Kanamoto H."/>
            <person name="Hattori M."/>
            <person name="Takase H."/>
            <person name="Tomizawa K."/>
        </authorList>
    </citation>
    <scope>NUCLEOTIDE SEQUENCE [LARGE SCALE GENOMIC DNA]</scope>
</reference>
<protein>
    <recommendedName>
        <fullName evidence="2">Acetyl-coenzyme A carboxylase carboxyl transferase subunit beta, chloroplastic</fullName>
        <shortName evidence="2">ACCase subunit beta</shortName>
        <shortName evidence="2">Acetyl-CoA carboxylase carboxyltransferase subunit beta</shortName>
        <ecNumber evidence="2">2.1.3.15</ecNumber>
    </recommendedName>
</protein>
<name>ACCD_POPAL</name>
<comment type="function">
    <text evidence="2">Component of the acetyl coenzyme A carboxylase (ACC) complex. Biotin carboxylase (BC) catalyzes the carboxylation of biotin on its carrier protein (BCCP) and then the CO(2) group is transferred by the transcarboxylase to acetyl-CoA to form malonyl-CoA.</text>
</comment>
<comment type="catalytic activity">
    <reaction evidence="2">
        <text>N(6)-carboxybiotinyl-L-lysyl-[protein] + acetyl-CoA = N(6)-biotinyl-L-lysyl-[protein] + malonyl-CoA</text>
        <dbReference type="Rhea" id="RHEA:54728"/>
        <dbReference type="Rhea" id="RHEA-COMP:10505"/>
        <dbReference type="Rhea" id="RHEA-COMP:10506"/>
        <dbReference type="ChEBI" id="CHEBI:57288"/>
        <dbReference type="ChEBI" id="CHEBI:57384"/>
        <dbReference type="ChEBI" id="CHEBI:83144"/>
        <dbReference type="ChEBI" id="CHEBI:83145"/>
        <dbReference type="EC" id="2.1.3.15"/>
    </reaction>
</comment>
<comment type="cofactor">
    <cofactor evidence="2">
        <name>Zn(2+)</name>
        <dbReference type="ChEBI" id="CHEBI:29105"/>
    </cofactor>
    <text evidence="2">Binds 1 zinc ion per subunit.</text>
</comment>
<comment type="pathway">
    <text evidence="2">Lipid metabolism; malonyl-CoA biosynthesis; malonyl-CoA from acetyl-CoA: step 1/1.</text>
</comment>
<comment type="subunit">
    <text evidence="1">Acetyl-CoA carboxylase is a heterohexamer composed of biotin carboxyl carrier protein, biotin carboxylase and 2 subunits each of ACCase subunit alpha and ACCase plastid-coded subunit beta (accD).</text>
</comment>
<comment type="subcellular location">
    <subcellularLocation>
        <location evidence="2">Plastid</location>
        <location evidence="2">Chloroplast stroma</location>
    </subcellularLocation>
</comment>
<comment type="similarity">
    <text evidence="2">Belongs to the AccD/PCCB family.</text>
</comment>
<evidence type="ECO:0000250" key="1"/>
<evidence type="ECO:0000255" key="2">
    <source>
        <dbReference type="HAMAP-Rule" id="MF_01395"/>
    </source>
</evidence>
<evidence type="ECO:0000255" key="3">
    <source>
        <dbReference type="PROSITE-ProRule" id="PRU01136"/>
    </source>
</evidence>
<geneLocation type="chloroplast"/>
<feature type="chain" id="PRO_0000359163" description="Acetyl-coenzyme A carboxylase carboxyl transferase subunit beta, chloroplastic">
    <location>
        <begin position="1"/>
        <end position="498"/>
    </location>
</feature>
<feature type="domain" description="CoA carboxyltransferase N-terminal" evidence="3">
    <location>
        <begin position="228"/>
        <end position="498"/>
    </location>
</feature>
<feature type="zinc finger region" description="C4-type" evidence="2">
    <location>
        <begin position="232"/>
        <end position="254"/>
    </location>
</feature>
<feature type="binding site" evidence="2">
    <location>
        <position position="232"/>
    </location>
    <ligand>
        <name>Zn(2+)</name>
        <dbReference type="ChEBI" id="CHEBI:29105"/>
    </ligand>
</feature>
<feature type="binding site" evidence="2">
    <location>
        <position position="235"/>
    </location>
    <ligand>
        <name>Zn(2+)</name>
        <dbReference type="ChEBI" id="CHEBI:29105"/>
    </ligand>
</feature>
<feature type="binding site" evidence="2">
    <location>
        <position position="251"/>
    </location>
    <ligand>
        <name>Zn(2+)</name>
        <dbReference type="ChEBI" id="CHEBI:29105"/>
    </ligand>
</feature>
<feature type="binding site" evidence="2">
    <location>
        <position position="254"/>
    </location>
    <ligand>
        <name>Zn(2+)</name>
        <dbReference type="ChEBI" id="CHEBI:29105"/>
    </ligand>
</feature>
<dbReference type="EC" id="2.1.3.15" evidence="2"/>
<dbReference type="EMBL" id="AP008956">
    <property type="protein sequence ID" value="BAE97214.1"/>
    <property type="molecule type" value="Genomic_DNA"/>
</dbReference>
<dbReference type="RefSeq" id="YP_665567.1">
    <property type="nucleotide sequence ID" value="NC_008235.1"/>
</dbReference>
<dbReference type="SMR" id="Q14FE8"/>
<dbReference type="GeneID" id="4178217"/>
<dbReference type="KEGG" id="palz:4178217"/>
<dbReference type="OrthoDB" id="30157at3646"/>
<dbReference type="UniPathway" id="UPA00655">
    <property type="reaction ID" value="UER00711"/>
</dbReference>
<dbReference type="GO" id="GO:0009317">
    <property type="term" value="C:acetyl-CoA carboxylase complex"/>
    <property type="evidence" value="ECO:0007669"/>
    <property type="project" value="InterPro"/>
</dbReference>
<dbReference type="GO" id="GO:0009570">
    <property type="term" value="C:chloroplast stroma"/>
    <property type="evidence" value="ECO:0007669"/>
    <property type="project" value="UniProtKB-SubCell"/>
</dbReference>
<dbReference type="GO" id="GO:0003989">
    <property type="term" value="F:acetyl-CoA carboxylase activity"/>
    <property type="evidence" value="ECO:0007669"/>
    <property type="project" value="InterPro"/>
</dbReference>
<dbReference type="GO" id="GO:0005524">
    <property type="term" value="F:ATP binding"/>
    <property type="evidence" value="ECO:0007669"/>
    <property type="project" value="UniProtKB-KW"/>
</dbReference>
<dbReference type="GO" id="GO:0016743">
    <property type="term" value="F:carboxyl- or carbamoyltransferase activity"/>
    <property type="evidence" value="ECO:0007669"/>
    <property type="project" value="UniProtKB-UniRule"/>
</dbReference>
<dbReference type="GO" id="GO:0008270">
    <property type="term" value="F:zinc ion binding"/>
    <property type="evidence" value="ECO:0007669"/>
    <property type="project" value="UniProtKB-UniRule"/>
</dbReference>
<dbReference type="GO" id="GO:0006633">
    <property type="term" value="P:fatty acid biosynthetic process"/>
    <property type="evidence" value="ECO:0007669"/>
    <property type="project" value="UniProtKB-KW"/>
</dbReference>
<dbReference type="GO" id="GO:2001295">
    <property type="term" value="P:malonyl-CoA biosynthetic process"/>
    <property type="evidence" value="ECO:0007669"/>
    <property type="project" value="UniProtKB-UniRule"/>
</dbReference>
<dbReference type="Gene3D" id="3.90.226.10">
    <property type="entry name" value="2-enoyl-CoA Hydratase, Chain A, domain 1"/>
    <property type="match status" value="1"/>
</dbReference>
<dbReference type="HAMAP" id="MF_01395">
    <property type="entry name" value="AcetylCoA_CT_beta"/>
    <property type="match status" value="1"/>
</dbReference>
<dbReference type="InterPro" id="IPR034733">
    <property type="entry name" value="AcCoA_carboxyl_beta"/>
</dbReference>
<dbReference type="InterPro" id="IPR000438">
    <property type="entry name" value="Acetyl_CoA_COase_Trfase_b_su"/>
</dbReference>
<dbReference type="InterPro" id="IPR029045">
    <property type="entry name" value="ClpP/crotonase-like_dom_sf"/>
</dbReference>
<dbReference type="InterPro" id="IPR011762">
    <property type="entry name" value="COA_CT_N"/>
</dbReference>
<dbReference type="NCBIfam" id="TIGR00515">
    <property type="entry name" value="accD"/>
    <property type="match status" value="1"/>
</dbReference>
<dbReference type="PANTHER" id="PTHR42995">
    <property type="entry name" value="ACETYL-COENZYME A CARBOXYLASE CARBOXYL TRANSFERASE SUBUNIT BETA, CHLOROPLASTIC"/>
    <property type="match status" value="1"/>
</dbReference>
<dbReference type="PANTHER" id="PTHR42995:SF5">
    <property type="entry name" value="ACETYL-COENZYME A CARBOXYLASE CARBOXYL TRANSFERASE SUBUNIT BETA, CHLOROPLASTIC"/>
    <property type="match status" value="1"/>
</dbReference>
<dbReference type="Pfam" id="PF01039">
    <property type="entry name" value="Carboxyl_trans"/>
    <property type="match status" value="1"/>
</dbReference>
<dbReference type="PRINTS" id="PR01070">
    <property type="entry name" value="ACCCTRFRASEB"/>
</dbReference>
<dbReference type="SUPFAM" id="SSF52096">
    <property type="entry name" value="ClpP/crotonase"/>
    <property type="match status" value="1"/>
</dbReference>
<dbReference type="PROSITE" id="PS50980">
    <property type="entry name" value="COA_CT_NTER"/>
    <property type="match status" value="1"/>
</dbReference>
<proteinExistence type="inferred from homology"/>
<gene>
    <name evidence="2" type="primary">accD</name>
</gene>
<accession>Q14FE8</accession>
<sequence length="498" mass="56151">MKKCWFHSMLSNVELEYRCRLSKSMDNLGPLENTSVSEDPILNDTEKNTYNWSHSDSSNVDHLVGVRDIRNLNVDDTFLVLGRDNKKDGYSIYFDIENQVFGIDNNHSFLSELEKEFSSYWNSSYLNKGSRSDDSHYDYSMYDNKYSWNNYINSCIDSYLRSQIGIASSILSGSENCSESYISTYILGESRNSSETGNSRLRTSTNGSDFALKENSNDLGVTQKYKHLWVQCEICYGLNYKKFFKSKMNICEQCGYHLKMSSSDRIELSIDPGTWDPMDEEMFSLDPIDFHSEEEPYKDRIDSYQKKTGLTEAIQTGIGQLNGIPVAIGVMDFQFMGGSMGSVVGEKITRLIEYATNQFLPLILVCASGGARMQEGSLSLMQMAKISSALYDYQSNKKLVYVSILTSPTTGGVTASFGMLGDIIIAEPNAYIAFAGKRVIEQTLNKTVPEGSQAAEFLFHKGLFDPIVPRNLLKGVLSELFQLHAFFPLNHNLSRTLT</sequence>
<keyword id="KW-0067">ATP-binding</keyword>
<keyword id="KW-0150">Chloroplast</keyword>
<keyword id="KW-0275">Fatty acid biosynthesis</keyword>
<keyword id="KW-0276">Fatty acid metabolism</keyword>
<keyword id="KW-0444">Lipid biosynthesis</keyword>
<keyword id="KW-0443">Lipid metabolism</keyword>
<keyword id="KW-0479">Metal-binding</keyword>
<keyword id="KW-0547">Nucleotide-binding</keyword>
<keyword id="KW-0934">Plastid</keyword>
<keyword id="KW-0808">Transferase</keyword>
<keyword id="KW-0862">Zinc</keyword>
<keyword id="KW-0863">Zinc-finger</keyword>
<organism>
    <name type="scientific">Populus alba</name>
    <name type="common">White poplar</name>
    <dbReference type="NCBI Taxonomy" id="43335"/>
    <lineage>
        <taxon>Eukaryota</taxon>
        <taxon>Viridiplantae</taxon>
        <taxon>Streptophyta</taxon>
        <taxon>Embryophyta</taxon>
        <taxon>Tracheophyta</taxon>
        <taxon>Spermatophyta</taxon>
        <taxon>Magnoliopsida</taxon>
        <taxon>eudicotyledons</taxon>
        <taxon>Gunneridae</taxon>
        <taxon>Pentapetalae</taxon>
        <taxon>rosids</taxon>
        <taxon>fabids</taxon>
        <taxon>Malpighiales</taxon>
        <taxon>Salicaceae</taxon>
        <taxon>Saliceae</taxon>
        <taxon>Populus</taxon>
    </lineage>
</organism>